<keyword id="KW-0150">Chloroplast</keyword>
<keyword id="KW-0240">DNA-directed RNA polymerase</keyword>
<keyword id="KW-0460">Magnesium</keyword>
<keyword id="KW-0479">Metal-binding</keyword>
<keyword id="KW-0548">Nucleotidyltransferase</keyword>
<keyword id="KW-0934">Plastid</keyword>
<keyword id="KW-0804">Transcription</keyword>
<keyword id="KW-0808">Transferase</keyword>
<keyword id="KW-0862">Zinc</keyword>
<evidence type="ECO:0000255" key="1">
    <source>
        <dbReference type="HAMAP-Rule" id="MF_01323"/>
    </source>
</evidence>
<evidence type="ECO:0000305" key="2"/>
<name>RPOC1_ACOGR</name>
<organism>
    <name type="scientific">Acorus gramineus</name>
    <name type="common">Dwarf sweet flag</name>
    <dbReference type="NCBI Taxonomy" id="55184"/>
    <lineage>
        <taxon>Eukaryota</taxon>
        <taxon>Viridiplantae</taxon>
        <taxon>Streptophyta</taxon>
        <taxon>Embryophyta</taxon>
        <taxon>Tracheophyta</taxon>
        <taxon>Spermatophyta</taxon>
        <taxon>Magnoliopsida</taxon>
        <taxon>Liliopsida</taxon>
        <taxon>Acoraceae</taxon>
        <taxon>Acorus</taxon>
    </lineage>
</organism>
<reference key="1">
    <citation type="journal article" date="2004" name="BMC Evol. Biol.">
        <title>Long branch attraction, taxon sampling, and the earliest angiosperms: Amborella or monocots?</title>
        <authorList>
            <person name="Stefanovic S."/>
            <person name="Rice D.W."/>
            <person name="Palmer J.D."/>
        </authorList>
    </citation>
    <scope>NUCLEOTIDE SEQUENCE [GENOMIC DNA]</scope>
</reference>
<feature type="chain" id="PRO_0000067857" description="DNA-directed RNA polymerase subunit beta'">
    <location>
        <begin position="1"/>
        <end position="682"/>
    </location>
</feature>
<feature type="binding site" evidence="1">
    <location>
        <position position="69"/>
    </location>
    <ligand>
        <name>Zn(2+)</name>
        <dbReference type="ChEBI" id="CHEBI:29105"/>
    </ligand>
</feature>
<feature type="binding site" evidence="1">
    <location>
        <position position="71"/>
    </location>
    <ligand>
        <name>Zn(2+)</name>
        <dbReference type="ChEBI" id="CHEBI:29105"/>
    </ligand>
</feature>
<feature type="binding site" evidence="1">
    <location>
        <position position="87"/>
    </location>
    <ligand>
        <name>Zn(2+)</name>
        <dbReference type="ChEBI" id="CHEBI:29105"/>
    </ligand>
</feature>
<feature type="binding site" evidence="1">
    <location>
        <position position="90"/>
    </location>
    <ligand>
        <name>Zn(2+)</name>
        <dbReference type="ChEBI" id="CHEBI:29105"/>
    </ligand>
</feature>
<feature type="binding site" evidence="1">
    <location>
        <position position="489"/>
    </location>
    <ligand>
        <name>Mg(2+)</name>
        <dbReference type="ChEBI" id="CHEBI:18420"/>
    </ligand>
</feature>
<feature type="binding site" evidence="1">
    <location>
        <position position="491"/>
    </location>
    <ligand>
        <name>Mg(2+)</name>
        <dbReference type="ChEBI" id="CHEBI:18420"/>
    </ligand>
</feature>
<feature type="binding site" evidence="1">
    <location>
        <position position="493"/>
    </location>
    <ligand>
        <name>Mg(2+)</name>
        <dbReference type="ChEBI" id="CHEBI:18420"/>
    </ligand>
</feature>
<sequence length="682" mass="78591">MIDRYKHQQLQIGSVSPQQISAWANKILPNGEIVGEVTKPYTFHYKTNKPEKDGLFCERIFGPIKSGICACGNYRVIGAEKEDPKFCEQCGVEFIDSRIRRYQMGYIKLACPVTHVWYLKRLPSYIANLLDKPLKELEGLVYCDFSFARPIAKKPTFLRLRGLFEYEIQSWKYSIPLFFTTQGFDTFRNREISTGAGAIREQLADLDLRIVIDNSSVEWKELGDEGSTGNEWEDRKIGRRKDFLVRRMELAKHFIRTNVEPERMVLCLLPVLPPELRPIIQIDGGKLMSSDINELYRRVIYRNNTLTDLLKTSRSTPGELVMCQEKLVQEAVDTLLDNGIRGQPMRDGHNKVYKSFSDVIEGKEGRFRETLLGKRVDYSGRSVIVVGPSLSLHRCGLPREIAIELFQTFVIRGLIRQHLASNIGIAKSKIREKEPIVWEILQEVMQGHPVLLNRAPTLHRLGIQAFQPVLVEGRAICLHPLVCKGFNADFDGDQMAVHVPLSLEAQAEARLLMFSHMNLLSPAIGDPISVPTQDMLIGLYVLTMGNHRGIFVNRYNPCNRRNYQNKTVDNNNYKHTKEKKPYFFSSYDALGAYQQKRINLHRPLWLRWRLDQRVIGSREVPIEVQYESLGTYQEIYGHYLIVRSVKKEILCIYIRTTVGHISFYREIEESVQGFCRAYSYGT</sequence>
<protein>
    <recommendedName>
        <fullName evidence="1">DNA-directed RNA polymerase subunit beta'</fullName>
        <ecNumber evidence="1">2.7.7.6</ecNumber>
    </recommendedName>
    <alternativeName>
        <fullName evidence="1">PEP</fullName>
    </alternativeName>
    <alternativeName>
        <fullName evidence="1">Plastid-encoded RNA polymerase subunit beta'</fullName>
        <shortName evidence="1">RNA polymerase subunit beta'</shortName>
    </alternativeName>
</protein>
<proteinExistence type="inferred from homology"/>
<dbReference type="EC" id="2.7.7.6" evidence="1"/>
<dbReference type="EMBL" id="AY757820">
    <property type="protein sequence ID" value="AAV74362.1"/>
    <property type="status" value="ALT_INIT"/>
    <property type="molecule type" value="Genomic_DNA"/>
</dbReference>
<dbReference type="EMBL" id="AY757819">
    <property type="protein sequence ID" value="AAV74362.1"/>
    <property type="status" value="JOINED"/>
    <property type="molecule type" value="Genomic_DNA"/>
</dbReference>
<dbReference type="SMR" id="Q5QA71"/>
<dbReference type="GO" id="GO:0009507">
    <property type="term" value="C:chloroplast"/>
    <property type="evidence" value="ECO:0007669"/>
    <property type="project" value="UniProtKB-SubCell"/>
</dbReference>
<dbReference type="GO" id="GO:0000428">
    <property type="term" value="C:DNA-directed RNA polymerase complex"/>
    <property type="evidence" value="ECO:0007669"/>
    <property type="project" value="UniProtKB-KW"/>
</dbReference>
<dbReference type="GO" id="GO:0005739">
    <property type="term" value="C:mitochondrion"/>
    <property type="evidence" value="ECO:0007669"/>
    <property type="project" value="GOC"/>
</dbReference>
<dbReference type="GO" id="GO:0003677">
    <property type="term" value="F:DNA binding"/>
    <property type="evidence" value="ECO:0007669"/>
    <property type="project" value="UniProtKB-UniRule"/>
</dbReference>
<dbReference type="GO" id="GO:0003899">
    <property type="term" value="F:DNA-directed RNA polymerase activity"/>
    <property type="evidence" value="ECO:0007669"/>
    <property type="project" value="UniProtKB-UniRule"/>
</dbReference>
<dbReference type="GO" id="GO:0000287">
    <property type="term" value="F:magnesium ion binding"/>
    <property type="evidence" value="ECO:0007669"/>
    <property type="project" value="UniProtKB-UniRule"/>
</dbReference>
<dbReference type="GO" id="GO:0008270">
    <property type="term" value="F:zinc ion binding"/>
    <property type="evidence" value="ECO:0007669"/>
    <property type="project" value="UniProtKB-UniRule"/>
</dbReference>
<dbReference type="GO" id="GO:0006351">
    <property type="term" value="P:DNA-templated transcription"/>
    <property type="evidence" value="ECO:0007669"/>
    <property type="project" value="UniProtKB-UniRule"/>
</dbReference>
<dbReference type="FunFam" id="1.10.40.90:FF:000002">
    <property type="entry name" value="DNA-directed RNA polymerase subunit"/>
    <property type="match status" value="1"/>
</dbReference>
<dbReference type="FunFam" id="4.10.860.120:FF:000007">
    <property type="entry name" value="DNA-directed RNA polymerase subunit gamma"/>
    <property type="match status" value="1"/>
</dbReference>
<dbReference type="Gene3D" id="1.10.40.90">
    <property type="match status" value="1"/>
</dbReference>
<dbReference type="Gene3D" id="2.40.40.20">
    <property type="match status" value="1"/>
</dbReference>
<dbReference type="Gene3D" id="4.10.860.120">
    <property type="entry name" value="RNA polymerase II, clamp domain"/>
    <property type="match status" value="1"/>
</dbReference>
<dbReference type="Gene3D" id="1.10.274.100">
    <property type="entry name" value="RNA polymerase Rpb1, domain 3"/>
    <property type="match status" value="1"/>
</dbReference>
<dbReference type="HAMAP" id="MF_01323">
    <property type="entry name" value="RNApol_bact_RpoC1"/>
    <property type="match status" value="1"/>
</dbReference>
<dbReference type="InterPro" id="IPR045867">
    <property type="entry name" value="DNA-dir_RpoC_beta_prime"/>
</dbReference>
<dbReference type="InterPro" id="IPR000722">
    <property type="entry name" value="RNA_pol_asu"/>
</dbReference>
<dbReference type="InterPro" id="IPR006592">
    <property type="entry name" value="RNA_pol_N"/>
</dbReference>
<dbReference type="InterPro" id="IPR007080">
    <property type="entry name" value="RNA_pol_Rpb1_1"/>
</dbReference>
<dbReference type="InterPro" id="IPR007066">
    <property type="entry name" value="RNA_pol_Rpb1_3"/>
</dbReference>
<dbReference type="InterPro" id="IPR042102">
    <property type="entry name" value="RNA_pol_Rpb1_3_sf"/>
</dbReference>
<dbReference type="InterPro" id="IPR044893">
    <property type="entry name" value="RNA_pol_Rpb1_clamp_domain"/>
</dbReference>
<dbReference type="InterPro" id="IPR034678">
    <property type="entry name" value="RNApol_RpoC1"/>
</dbReference>
<dbReference type="PANTHER" id="PTHR19376">
    <property type="entry name" value="DNA-DIRECTED RNA POLYMERASE"/>
    <property type="match status" value="1"/>
</dbReference>
<dbReference type="PANTHER" id="PTHR19376:SF54">
    <property type="entry name" value="DNA-DIRECTED RNA POLYMERASE SUBUNIT BETA"/>
    <property type="match status" value="1"/>
</dbReference>
<dbReference type="Pfam" id="PF04997">
    <property type="entry name" value="RNA_pol_Rpb1_1"/>
    <property type="match status" value="1"/>
</dbReference>
<dbReference type="Pfam" id="PF00623">
    <property type="entry name" value="RNA_pol_Rpb1_2"/>
    <property type="match status" value="1"/>
</dbReference>
<dbReference type="Pfam" id="PF04983">
    <property type="entry name" value="RNA_pol_Rpb1_3"/>
    <property type="match status" value="1"/>
</dbReference>
<dbReference type="SMART" id="SM00663">
    <property type="entry name" value="RPOLA_N"/>
    <property type="match status" value="1"/>
</dbReference>
<dbReference type="SUPFAM" id="SSF64484">
    <property type="entry name" value="beta and beta-prime subunits of DNA dependent RNA-polymerase"/>
    <property type="match status" value="1"/>
</dbReference>
<comment type="function">
    <text evidence="1">DNA-dependent RNA polymerase catalyzes the transcription of DNA into RNA using the four ribonucleoside triphosphates as substrates.</text>
</comment>
<comment type="catalytic activity">
    <reaction evidence="1">
        <text>RNA(n) + a ribonucleoside 5'-triphosphate = RNA(n+1) + diphosphate</text>
        <dbReference type="Rhea" id="RHEA:21248"/>
        <dbReference type="Rhea" id="RHEA-COMP:14527"/>
        <dbReference type="Rhea" id="RHEA-COMP:17342"/>
        <dbReference type="ChEBI" id="CHEBI:33019"/>
        <dbReference type="ChEBI" id="CHEBI:61557"/>
        <dbReference type="ChEBI" id="CHEBI:140395"/>
        <dbReference type="EC" id="2.7.7.6"/>
    </reaction>
</comment>
<comment type="cofactor">
    <cofactor evidence="1">
        <name>Mg(2+)</name>
        <dbReference type="ChEBI" id="CHEBI:18420"/>
    </cofactor>
    <text evidence="1">Binds 1 Mg(2+) ion per subunit.</text>
</comment>
<comment type="cofactor">
    <cofactor evidence="1">
        <name>Zn(2+)</name>
        <dbReference type="ChEBI" id="CHEBI:29105"/>
    </cofactor>
    <text evidence="1">Binds 1 Zn(2+) ion per subunit.</text>
</comment>
<comment type="subunit">
    <text evidence="1">In plastids the minimal PEP RNA polymerase catalytic core is composed of four subunits: alpha, beta, beta', and beta''. When a (nuclear-encoded) sigma factor is associated with the core the holoenzyme is formed, which can initiate transcription.</text>
</comment>
<comment type="subcellular location">
    <subcellularLocation>
        <location evidence="1">Plastid</location>
        <location evidence="1">Chloroplast</location>
    </subcellularLocation>
</comment>
<comment type="similarity">
    <text evidence="1">Belongs to the RNA polymerase beta' chain family. RpoC1 subfamily.</text>
</comment>
<comment type="sequence caution" evidence="2">
    <conflict type="erroneous initiation">
        <sequence resource="EMBL-CDS" id="AAV74362"/>
    </conflict>
    <text>Extended N-terminus.</text>
</comment>
<gene>
    <name evidence="1" type="primary">rpoC1</name>
</gene>
<geneLocation type="chloroplast"/>
<accession>Q5QA71</accession>